<gene>
    <name evidence="1" type="primary">fabV</name>
    <name type="ordered locus">Shew_2503</name>
</gene>
<name>FABV_SHELP</name>
<protein>
    <recommendedName>
        <fullName evidence="1">Enoyl-[acyl-carrier-protein] reductase [NADH]</fullName>
        <shortName evidence="1">ENR</shortName>
        <ecNumber evidence="1">1.3.1.9</ecNumber>
    </recommendedName>
</protein>
<sequence>MIIKPKTRGFICTTTHPVGCEANVLEQINITKAKGPVANGPKKVLVIGSSSGYGLSSRIAAAFGSGAATLGVFFEKPGTETKPGTAGWYNSAAFDKFAKQGGLYSKSLNCDAFSHEAKQKAIELIKQDLGQVDMVVYSLASPVRKLPDSGELIRSSLKPIGETYKSTAVDTNKDLIIETSVEPATEQEIEDTVTVMGGQDWELWINALAEAGVLTPDCKTVAYSYIGTELTWPIYWHGALGKAKMDLDRAAHALNDKLSATGGSANVAVLKSVVTQASSAIPVMPLYIAMVFKKMREEGLHEGCQEQINRMFHERLYRADGAAPAVDDANRLRLDDWELRDEIQQHCRDLWPTITTENLSELTDYREYKEEFLKLFGFGIESVDYDADVNPEVNFDVEQF</sequence>
<evidence type="ECO:0000255" key="1">
    <source>
        <dbReference type="HAMAP-Rule" id="MF_01838"/>
    </source>
</evidence>
<organism>
    <name type="scientific">Shewanella loihica (strain ATCC BAA-1088 / PV-4)</name>
    <dbReference type="NCBI Taxonomy" id="323850"/>
    <lineage>
        <taxon>Bacteria</taxon>
        <taxon>Pseudomonadati</taxon>
        <taxon>Pseudomonadota</taxon>
        <taxon>Gammaproteobacteria</taxon>
        <taxon>Alteromonadales</taxon>
        <taxon>Shewanellaceae</taxon>
        <taxon>Shewanella</taxon>
    </lineage>
</organism>
<accession>A3QFX1</accession>
<keyword id="KW-0275">Fatty acid biosynthesis</keyword>
<keyword id="KW-0276">Fatty acid metabolism</keyword>
<keyword id="KW-0444">Lipid biosynthesis</keyword>
<keyword id="KW-0443">Lipid metabolism</keyword>
<keyword id="KW-0520">NAD</keyword>
<keyword id="KW-0560">Oxidoreductase</keyword>
<keyword id="KW-1185">Reference proteome</keyword>
<comment type="function">
    <text evidence="1">Involved in the final reduction of the elongation cycle of fatty acid synthesis (FAS II). Catalyzes the reduction of a carbon-carbon double bond in an enoyl moiety that is covalently linked to an acyl carrier protein (ACP).</text>
</comment>
<comment type="catalytic activity">
    <reaction evidence="1">
        <text>a 2,3-saturated acyl-[ACP] + NAD(+) = a (2E)-enoyl-[ACP] + NADH + H(+)</text>
        <dbReference type="Rhea" id="RHEA:10240"/>
        <dbReference type="Rhea" id="RHEA-COMP:9925"/>
        <dbReference type="Rhea" id="RHEA-COMP:9926"/>
        <dbReference type="ChEBI" id="CHEBI:15378"/>
        <dbReference type="ChEBI" id="CHEBI:57540"/>
        <dbReference type="ChEBI" id="CHEBI:57945"/>
        <dbReference type="ChEBI" id="CHEBI:78784"/>
        <dbReference type="ChEBI" id="CHEBI:78785"/>
        <dbReference type="EC" id="1.3.1.9"/>
    </reaction>
</comment>
<comment type="pathway">
    <text evidence="1">Lipid metabolism; fatty acid biosynthesis.</text>
</comment>
<comment type="subunit">
    <text evidence="1">Monomer.</text>
</comment>
<comment type="similarity">
    <text evidence="1">Belongs to the TER reductase family.</text>
</comment>
<feature type="chain" id="PRO_1000070500" description="Enoyl-[acyl-carrier-protein] reductase [NADH]">
    <location>
        <begin position="1"/>
        <end position="400"/>
    </location>
</feature>
<feature type="active site" description="Proton donor" evidence="1">
    <location>
        <position position="235"/>
    </location>
</feature>
<feature type="binding site" evidence="1">
    <location>
        <begin position="48"/>
        <end position="53"/>
    </location>
    <ligand>
        <name>NAD(+)</name>
        <dbReference type="ChEBI" id="CHEBI:57540"/>
    </ligand>
</feature>
<feature type="binding site" evidence="1">
    <location>
        <begin position="74"/>
        <end position="75"/>
    </location>
    <ligand>
        <name>NAD(+)</name>
        <dbReference type="ChEBI" id="CHEBI:57540"/>
    </ligand>
</feature>
<feature type="binding site" evidence="1">
    <location>
        <begin position="111"/>
        <end position="112"/>
    </location>
    <ligand>
        <name>NAD(+)</name>
        <dbReference type="ChEBI" id="CHEBI:57540"/>
    </ligand>
</feature>
<feature type="binding site" evidence="1">
    <location>
        <begin position="139"/>
        <end position="140"/>
    </location>
    <ligand>
        <name>NAD(+)</name>
        <dbReference type="ChEBI" id="CHEBI:57540"/>
    </ligand>
</feature>
<feature type="binding site" evidence="1">
    <location>
        <position position="225"/>
    </location>
    <ligand>
        <name>substrate</name>
    </ligand>
</feature>
<feature type="binding site" evidence="1">
    <location>
        <position position="244"/>
    </location>
    <ligand>
        <name>NAD(+)</name>
        <dbReference type="ChEBI" id="CHEBI:57540"/>
    </ligand>
</feature>
<feature type="binding site" evidence="1">
    <location>
        <begin position="273"/>
        <end position="275"/>
    </location>
    <ligand>
        <name>NAD(+)</name>
        <dbReference type="ChEBI" id="CHEBI:57540"/>
    </ligand>
</feature>
<feature type="site" description="Plays an important role in discriminating NADH against NADPH" evidence="1">
    <location>
        <position position="75"/>
    </location>
</feature>
<proteinExistence type="inferred from homology"/>
<reference key="1">
    <citation type="submission" date="2007-03" db="EMBL/GenBank/DDBJ databases">
        <title>Complete sequence of Shewanella loihica PV-4.</title>
        <authorList>
            <consortium name="US DOE Joint Genome Institute"/>
            <person name="Copeland A."/>
            <person name="Lucas S."/>
            <person name="Lapidus A."/>
            <person name="Barry K."/>
            <person name="Detter J.C."/>
            <person name="Glavina del Rio T."/>
            <person name="Hammon N."/>
            <person name="Israni S."/>
            <person name="Dalin E."/>
            <person name="Tice H."/>
            <person name="Pitluck S."/>
            <person name="Chain P."/>
            <person name="Malfatti S."/>
            <person name="Shin M."/>
            <person name="Vergez L."/>
            <person name="Schmutz J."/>
            <person name="Larimer F."/>
            <person name="Land M."/>
            <person name="Hauser L."/>
            <person name="Kyrpides N."/>
            <person name="Mikhailova N."/>
            <person name="Romine M.F."/>
            <person name="Serres G."/>
            <person name="Fredrickson J."/>
            <person name="Tiedje J."/>
            <person name="Richardson P."/>
        </authorList>
    </citation>
    <scope>NUCLEOTIDE SEQUENCE [LARGE SCALE GENOMIC DNA]</scope>
    <source>
        <strain>ATCC BAA-1088 / PV-4</strain>
    </source>
</reference>
<dbReference type="EC" id="1.3.1.9" evidence="1"/>
<dbReference type="EMBL" id="CP000606">
    <property type="protein sequence ID" value="ABO24369.1"/>
    <property type="molecule type" value="Genomic_DNA"/>
</dbReference>
<dbReference type="RefSeq" id="WP_011866300.1">
    <property type="nucleotide sequence ID" value="NC_009092.1"/>
</dbReference>
<dbReference type="SMR" id="A3QFX1"/>
<dbReference type="STRING" id="323850.Shew_2503"/>
<dbReference type="KEGG" id="slo:Shew_2503"/>
<dbReference type="eggNOG" id="COG3007">
    <property type="taxonomic scope" value="Bacteria"/>
</dbReference>
<dbReference type="HOGENOM" id="CLU_057698_1_0_6"/>
<dbReference type="OrthoDB" id="9802260at2"/>
<dbReference type="UniPathway" id="UPA00094"/>
<dbReference type="Proteomes" id="UP000001558">
    <property type="component" value="Chromosome"/>
</dbReference>
<dbReference type="GO" id="GO:0004318">
    <property type="term" value="F:enoyl-[acyl-carrier-protein] reductase (NADH) activity"/>
    <property type="evidence" value="ECO:0007669"/>
    <property type="project" value="UniProtKB-UniRule"/>
</dbReference>
<dbReference type="GO" id="GO:0051287">
    <property type="term" value="F:NAD binding"/>
    <property type="evidence" value="ECO:0007669"/>
    <property type="project" value="UniProtKB-UniRule"/>
</dbReference>
<dbReference type="GO" id="GO:0050343">
    <property type="term" value="F:trans-2-enoyl-CoA reductase (NADH) activity"/>
    <property type="evidence" value="ECO:0007669"/>
    <property type="project" value="TreeGrafter"/>
</dbReference>
<dbReference type="GO" id="GO:0006633">
    <property type="term" value="P:fatty acid biosynthetic process"/>
    <property type="evidence" value="ECO:0007669"/>
    <property type="project" value="UniProtKB-UniRule"/>
</dbReference>
<dbReference type="FunFam" id="3.40.50.720:FF:000221">
    <property type="entry name" value="Enoyl-[acyl-carrier-protein] reductase [NADH]"/>
    <property type="match status" value="1"/>
</dbReference>
<dbReference type="Gene3D" id="3.40.50.720">
    <property type="entry name" value="NAD(P)-binding Rossmann-like Domain"/>
    <property type="match status" value="1"/>
</dbReference>
<dbReference type="HAMAP" id="MF_01838">
    <property type="entry name" value="FabV_reductase"/>
    <property type="match status" value="1"/>
</dbReference>
<dbReference type="InterPro" id="IPR024906">
    <property type="entry name" value="Eno_Rdtase_FAD-bd_dom"/>
</dbReference>
<dbReference type="InterPro" id="IPR024910">
    <property type="entry name" value="Enoyl-CoA_Rdtase_cat_dom"/>
</dbReference>
<dbReference type="InterPro" id="IPR050048">
    <property type="entry name" value="FabV-like_NADH_b"/>
</dbReference>
<dbReference type="InterPro" id="IPR010758">
    <property type="entry name" value="Trans-2-enoyl-CoA_reductase"/>
</dbReference>
<dbReference type="NCBIfam" id="NF043048">
    <property type="entry name" value="EnoyACPredFabV"/>
    <property type="match status" value="1"/>
</dbReference>
<dbReference type="NCBIfam" id="NF010177">
    <property type="entry name" value="PRK13656.1"/>
    <property type="match status" value="1"/>
</dbReference>
<dbReference type="PANTHER" id="PTHR37480">
    <property type="entry name" value="ENOYL-[ACYL-CARRIER-PROTEIN] REDUCTASE [NADH]"/>
    <property type="match status" value="1"/>
</dbReference>
<dbReference type="PANTHER" id="PTHR37480:SF1">
    <property type="entry name" value="ENOYL-[ACYL-CARRIER-PROTEIN] REDUCTASE [NADH]"/>
    <property type="match status" value="1"/>
</dbReference>
<dbReference type="Pfam" id="PF07055">
    <property type="entry name" value="Eno-Rase_FAD_bd"/>
    <property type="match status" value="1"/>
</dbReference>
<dbReference type="Pfam" id="PF12242">
    <property type="entry name" value="Eno-Rase_NADH_b"/>
    <property type="match status" value="1"/>
</dbReference>
<dbReference type="Pfam" id="PF12241">
    <property type="entry name" value="Enoyl_reductase"/>
    <property type="match status" value="1"/>
</dbReference>